<proteinExistence type="inferred from homology"/>
<gene>
    <name evidence="1" type="primary">thrS</name>
    <name type="ordered locus">Ppro_2308</name>
</gene>
<organism>
    <name type="scientific">Pelobacter propionicus (strain DSM 2379 / NBRC 103807 / OttBd1)</name>
    <dbReference type="NCBI Taxonomy" id="338966"/>
    <lineage>
        <taxon>Bacteria</taxon>
        <taxon>Pseudomonadati</taxon>
        <taxon>Thermodesulfobacteriota</taxon>
        <taxon>Desulfuromonadia</taxon>
        <taxon>Desulfuromonadales</taxon>
        <taxon>Desulfuromonadaceae</taxon>
        <taxon>Pelobacter</taxon>
    </lineage>
</organism>
<reference key="1">
    <citation type="submission" date="2006-10" db="EMBL/GenBank/DDBJ databases">
        <title>Complete sequence of chromosome of Pelobacter propionicus DSM 2379.</title>
        <authorList>
            <consortium name="US DOE Joint Genome Institute"/>
            <person name="Copeland A."/>
            <person name="Lucas S."/>
            <person name="Lapidus A."/>
            <person name="Barry K."/>
            <person name="Detter J.C."/>
            <person name="Glavina del Rio T."/>
            <person name="Hammon N."/>
            <person name="Israni S."/>
            <person name="Dalin E."/>
            <person name="Tice H."/>
            <person name="Pitluck S."/>
            <person name="Saunders E."/>
            <person name="Brettin T."/>
            <person name="Bruce D."/>
            <person name="Han C."/>
            <person name="Tapia R."/>
            <person name="Schmutz J."/>
            <person name="Larimer F."/>
            <person name="Land M."/>
            <person name="Hauser L."/>
            <person name="Kyrpides N."/>
            <person name="Kim E."/>
            <person name="Lovley D."/>
            <person name="Richardson P."/>
        </authorList>
    </citation>
    <scope>NUCLEOTIDE SEQUENCE [LARGE SCALE GENOMIC DNA]</scope>
    <source>
        <strain>DSM 2379 / NBRC 103807 / OttBd1</strain>
    </source>
</reference>
<evidence type="ECO:0000255" key="1">
    <source>
        <dbReference type="HAMAP-Rule" id="MF_00184"/>
    </source>
</evidence>
<evidence type="ECO:0000255" key="2">
    <source>
        <dbReference type="PROSITE-ProRule" id="PRU01228"/>
    </source>
</evidence>
<comment type="function">
    <text evidence="1">Catalyzes the attachment of threonine to tRNA(Thr) in a two-step reaction: L-threonine is first activated by ATP to form Thr-AMP and then transferred to the acceptor end of tRNA(Thr). Also edits incorrectly charged L-seryl-tRNA(Thr).</text>
</comment>
<comment type="catalytic activity">
    <reaction evidence="1">
        <text>tRNA(Thr) + L-threonine + ATP = L-threonyl-tRNA(Thr) + AMP + diphosphate + H(+)</text>
        <dbReference type="Rhea" id="RHEA:24624"/>
        <dbReference type="Rhea" id="RHEA-COMP:9670"/>
        <dbReference type="Rhea" id="RHEA-COMP:9704"/>
        <dbReference type="ChEBI" id="CHEBI:15378"/>
        <dbReference type="ChEBI" id="CHEBI:30616"/>
        <dbReference type="ChEBI" id="CHEBI:33019"/>
        <dbReference type="ChEBI" id="CHEBI:57926"/>
        <dbReference type="ChEBI" id="CHEBI:78442"/>
        <dbReference type="ChEBI" id="CHEBI:78534"/>
        <dbReference type="ChEBI" id="CHEBI:456215"/>
        <dbReference type="EC" id="6.1.1.3"/>
    </reaction>
</comment>
<comment type="cofactor">
    <cofactor evidence="1">
        <name>Zn(2+)</name>
        <dbReference type="ChEBI" id="CHEBI:29105"/>
    </cofactor>
    <text evidence="1">Binds 1 zinc ion per subunit.</text>
</comment>
<comment type="subunit">
    <text evidence="1">Homodimer.</text>
</comment>
<comment type="subcellular location">
    <subcellularLocation>
        <location evidence="1">Cytoplasm</location>
    </subcellularLocation>
</comment>
<comment type="similarity">
    <text evidence="1">Belongs to the class-II aminoacyl-tRNA synthetase family.</text>
</comment>
<accession>A1ARE5</accession>
<dbReference type="EC" id="6.1.1.3" evidence="1"/>
<dbReference type="EMBL" id="CP000482">
    <property type="protein sequence ID" value="ABK99915.1"/>
    <property type="molecule type" value="Genomic_DNA"/>
</dbReference>
<dbReference type="RefSeq" id="WP_011736171.1">
    <property type="nucleotide sequence ID" value="NC_008609.1"/>
</dbReference>
<dbReference type="SMR" id="A1ARE5"/>
<dbReference type="STRING" id="338966.Ppro_2308"/>
<dbReference type="KEGG" id="ppd:Ppro_2308"/>
<dbReference type="eggNOG" id="COG0441">
    <property type="taxonomic scope" value="Bacteria"/>
</dbReference>
<dbReference type="HOGENOM" id="CLU_008554_0_1_7"/>
<dbReference type="OrthoDB" id="9802304at2"/>
<dbReference type="Proteomes" id="UP000006732">
    <property type="component" value="Chromosome"/>
</dbReference>
<dbReference type="GO" id="GO:0005829">
    <property type="term" value="C:cytosol"/>
    <property type="evidence" value="ECO:0007669"/>
    <property type="project" value="TreeGrafter"/>
</dbReference>
<dbReference type="GO" id="GO:0005524">
    <property type="term" value="F:ATP binding"/>
    <property type="evidence" value="ECO:0007669"/>
    <property type="project" value="UniProtKB-UniRule"/>
</dbReference>
<dbReference type="GO" id="GO:0046872">
    <property type="term" value="F:metal ion binding"/>
    <property type="evidence" value="ECO:0007669"/>
    <property type="project" value="UniProtKB-KW"/>
</dbReference>
<dbReference type="GO" id="GO:0004829">
    <property type="term" value="F:threonine-tRNA ligase activity"/>
    <property type="evidence" value="ECO:0007669"/>
    <property type="project" value="UniProtKB-UniRule"/>
</dbReference>
<dbReference type="GO" id="GO:0000049">
    <property type="term" value="F:tRNA binding"/>
    <property type="evidence" value="ECO:0007669"/>
    <property type="project" value="UniProtKB-KW"/>
</dbReference>
<dbReference type="GO" id="GO:0006435">
    <property type="term" value="P:threonyl-tRNA aminoacylation"/>
    <property type="evidence" value="ECO:0007669"/>
    <property type="project" value="UniProtKB-UniRule"/>
</dbReference>
<dbReference type="CDD" id="cd01667">
    <property type="entry name" value="TGS_ThrRS"/>
    <property type="match status" value="1"/>
</dbReference>
<dbReference type="CDD" id="cd00860">
    <property type="entry name" value="ThrRS_anticodon"/>
    <property type="match status" value="1"/>
</dbReference>
<dbReference type="CDD" id="cd00771">
    <property type="entry name" value="ThrRS_core"/>
    <property type="match status" value="1"/>
</dbReference>
<dbReference type="FunFam" id="3.10.20.30:FF:000005">
    <property type="entry name" value="Threonine--tRNA ligase"/>
    <property type="match status" value="1"/>
</dbReference>
<dbReference type="FunFam" id="3.30.54.20:FF:000002">
    <property type="entry name" value="Threonine--tRNA ligase"/>
    <property type="match status" value="1"/>
</dbReference>
<dbReference type="FunFam" id="3.30.930.10:FF:000002">
    <property type="entry name" value="Threonine--tRNA ligase"/>
    <property type="match status" value="1"/>
</dbReference>
<dbReference type="FunFam" id="3.40.50.800:FF:000001">
    <property type="entry name" value="Threonine--tRNA ligase"/>
    <property type="match status" value="1"/>
</dbReference>
<dbReference type="FunFam" id="3.30.980.10:FF:000005">
    <property type="entry name" value="Threonyl-tRNA synthetase, mitochondrial"/>
    <property type="match status" value="1"/>
</dbReference>
<dbReference type="Gene3D" id="3.10.20.30">
    <property type="match status" value="1"/>
</dbReference>
<dbReference type="Gene3D" id="3.30.54.20">
    <property type="match status" value="1"/>
</dbReference>
<dbReference type="Gene3D" id="3.40.50.800">
    <property type="entry name" value="Anticodon-binding domain"/>
    <property type="match status" value="1"/>
</dbReference>
<dbReference type="Gene3D" id="3.30.930.10">
    <property type="entry name" value="Bira Bifunctional Protein, Domain 2"/>
    <property type="match status" value="1"/>
</dbReference>
<dbReference type="Gene3D" id="3.30.980.10">
    <property type="entry name" value="Threonyl-trna Synthetase, Chain A, domain 2"/>
    <property type="match status" value="1"/>
</dbReference>
<dbReference type="HAMAP" id="MF_00184">
    <property type="entry name" value="Thr_tRNA_synth"/>
    <property type="match status" value="1"/>
</dbReference>
<dbReference type="InterPro" id="IPR002314">
    <property type="entry name" value="aa-tRNA-synt_IIb"/>
</dbReference>
<dbReference type="InterPro" id="IPR006195">
    <property type="entry name" value="aa-tRNA-synth_II"/>
</dbReference>
<dbReference type="InterPro" id="IPR045864">
    <property type="entry name" value="aa-tRNA-synth_II/BPL/LPL"/>
</dbReference>
<dbReference type="InterPro" id="IPR004154">
    <property type="entry name" value="Anticodon-bd"/>
</dbReference>
<dbReference type="InterPro" id="IPR036621">
    <property type="entry name" value="Anticodon-bd_dom_sf"/>
</dbReference>
<dbReference type="InterPro" id="IPR012675">
    <property type="entry name" value="Beta-grasp_dom_sf"/>
</dbReference>
<dbReference type="InterPro" id="IPR004095">
    <property type="entry name" value="TGS"/>
</dbReference>
<dbReference type="InterPro" id="IPR012676">
    <property type="entry name" value="TGS-like"/>
</dbReference>
<dbReference type="InterPro" id="IPR002320">
    <property type="entry name" value="Thr-tRNA-ligase_IIa"/>
</dbReference>
<dbReference type="InterPro" id="IPR018163">
    <property type="entry name" value="Thr/Ala-tRNA-synth_IIc_edit"/>
</dbReference>
<dbReference type="InterPro" id="IPR047246">
    <property type="entry name" value="ThrRS_anticodon"/>
</dbReference>
<dbReference type="InterPro" id="IPR033728">
    <property type="entry name" value="ThrRS_core"/>
</dbReference>
<dbReference type="InterPro" id="IPR012947">
    <property type="entry name" value="tRNA_SAD"/>
</dbReference>
<dbReference type="NCBIfam" id="TIGR00418">
    <property type="entry name" value="thrS"/>
    <property type="match status" value="1"/>
</dbReference>
<dbReference type="PANTHER" id="PTHR11451:SF44">
    <property type="entry name" value="THREONINE--TRNA LIGASE, CHLOROPLASTIC_MITOCHONDRIAL 2"/>
    <property type="match status" value="1"/>
</dbReference>
<dbReference type="PANTHER" id="PTHR11451">
    <property type="entry name" value="THREONINE-TRNA LIGASE"/>
    <property type="match status" value="1"/>
</dbReference>
<dbReference type="Pfam" id="PF03129">
    <property type="entry name" value="HGTP_anticodon"/>
    <property type="match status" value="1"/>
</dbReference>
<dbReference type="Pfam" id="PF02824">
    <property type="entry name" value="TGS"/>
    <property type="match status" value="1"/>
</dbReference>
<dbReference type="Pfam" id="PF00587">
    <property type="entry name" value="tRNA-synt_2b"/>
    <property type="match status" value="1"/>
</dbReference>
<dbReference type="Pfam" id="PF07973">
    <property type="entry name" value="tRNA_SAD"/>
    <property type="match status" value="1"/>
</dbReference>
<dbReference type="PRINTS" id="PR01047">
    <property type="entry name" value="TRNASYNTHTHR"/>
</dbReference>
<dbReference type="SMART" id="SM00863">
    <property type="entry name" value="tRNA_SAD"/>
    <property type="match status" value="1"/>
</dbReference>
<dbReference type="SUPFAM" id="SSF52954">
    <property type="entry name" value="Class II aaRS ABD-related"/>
    <property type="match status" value="1"/>
</dbReference>
<dbReference type="SUPFAM" id="SSF55681">
    <property type="entry name" value="Class II aaRS and biotin synthetases"/>
    <property type="match status" value="1"/>
</dbReference>
<dbReference type="SUPFAM" id="SSF81271">
    <property type="entry name" value="TGS-like"/>
    <property type="match status" value="1"/>
</dbReference>
<dbReference type="SUPFAM" id="SSF55186">
    <property type="entry name" value="ThrRS/AlaRS common domain"/>
    <property type="match status" value="1"/>
</dbReference>
<dbReference type="PROSITE" id="PS50862">
    <property type="entry name" value="AA_TRNA_LIGASE_II"/>
    <property type="match status" value="1"/>
</dbReference>
<dbReference type="PROSITE" id="PS51880">
    <property type="entry name" value="TGS"/>
    <property type="match status" value="1"/>
</dbReference>
<name>SYT_PELPD</name>
<protein>
    <recommendedName>
        <fullName evidence="1">Threonine--tRNA ligase</fullName>
        <ecNumber evidence="1">6.1.1.3</ecNumber>
    </recommendedName>
    <alternativeName>
        <fullName evidence="1">Threonyl-tRNA synthetase</fullName>
        <shortName evidence="1">ThrRS</shortName>
    </alternativeName>
</protein>
<keyword id="KW-0030">Aminoacyl-tRNA synthetase</keyword>
<keyword id="KW-0067">ATP-binding</keyword>
<keyword id="KW-0963">Cytoplasm</keyword>
<keyword id="KW-0436">Ligase</keyword>
<keyword id="KW-0479">Metal-binding</keyword>
<keyword id="KW-0547">Nucleotide-binding</keyword>
<keyword id="KW-0648">Protein biosynthesis</keyword>
<keyword id="KW-1185">Reference proteome</keyword>
<keyword id="KW-0694">RNA-binding</keyword>
<keyword id="KW-0820">tRNA-binding</keyword>
<keyword id="KW-0862">Zinc</keyword>
<feature type="chain" id="PRO_1000020459" description="Threonine--tRNA ligase">
    <location>
        <begin position="1"/>
        <end position="636"/>
    </location>
</feature>
<feature type="domain" description="TGS" evidence="2">
    <location>
        <begin position="1"/>
        <end position="63"/>
    </location>
</feature>
<feature type="region of interest" description="Catalytic" evidence="1">
    <location>
        <begin position="243"/>
        <end position="534"/>
    </location>
</feature>
<feature type="binding site" evidence="1">
    <location>
        <position position="335"/>
    </location>
    <ligand>
        <name>Zn(2+)</name>
        <dbReference type="ChEBI" id="CHEBI:29105"/>
    </ligand>
</feature>
<feature type="binding site" evidence="1">
    <location>
        <position position="386"/>
    </location>
    <ligand>
        <name>Zn(2+)</name>
        <dbReference type="ChEBI" id="CHEBI:29105"/>
    </ligand>
</feature>
<feature type="binding site" evidence="1">
    <location>
        <position position="511"/>
    </location>
    <ligand>
        <name>Zn(2+)</name>
        <dbReference type="ChEBI" id="CHEBI:29105"/>
    </ligand>
</feature>
<sequence length="636" mass="71878">MSSISIALPDGSKREIASGSTIADLAASIGAGLAKAAIAGKLDGELVDLSTELKDDSRVEIITEKSPEALTVIRHSAAHLMAQAVKELFPQAKVTIGPAIESGFYYDFDMDAPFTPEDLERIEARMAELAAANQKIERRVLSSSEAVSLFSGMGENYKVELINDLAAETVSVYSQGDFADLCRGPHLPSTSRIKAFKLLSIAGAYWRGDEKNRMLQRIYGTAFADKKELEAYLHRLEESKRRDHRRLGRELDLFSFSDEVGAGLVIWHPKGAMLRTILEDFERREHLKRGYDIVLGPQILKKELWQRSGHYENYRENMYFTEVDEQSYGIKPMNCLAHMMIYKSHLRSYRDLPLRYFELGTVHRHERAGVLHGLLRVRGFTQDDAHILCAPEQLDGEIKGVLKFVSDVMAIFGFEYEMELSTRPEKSIGDDAAWELATEALLSALKDTGRSFEINEGDGAFYGPKIDIKLKDALDRRWQCATIQCDFTLPERFDLQYVAADGEKKRPVMVHRVVLGAIERFIGVLIEHYAGNFPLWLSPVQAMLVTVTDNHIPYAQGVLEHLREAGIRVQGDFRNEKLSFKIREAQLQKVPYMLVIGDKEMESATVTPRFRDGKNLVAMKPEDFVAFVVEETKNFR</sequence>